<proteinExistence type="evidence at transcript level"/>
<reference key="1">
    <citation type="journal article" date="1993" name="Mol. Phylogenet. Evol.">
        <title>Molecular phylogeny of the New World monkeys (Platyrrhini, primates).</title>
        <authorList>
            <person name="Schneider H."/>
            <person name="Schneider M.P.C."/>
            <person name="Sampaio I."/>
            <person name="Harada M.L."/>
            <person name="Stanhope M.J."/>
            <person name="Czekysbuaj J."/>
            <person name="Goodman M."/>
        </authorList>
    </citation>
    <scope>NUCLEOTIDE SEQUENCE [GENOMIC DNA]</scope>
    <source>
        <tissue>Lymphocyte</tissue>
    </source>
</reference>
<feature type="chain" id="PRO_0000053195" description="Hemoglobin subunit epsilon">
    <location>
        <begin position="1"/>
        <end position="147"/>
    </location>
</feature>
<feature type="domain" description="Globin" evidence="2">
    <location>
        <begin position="3"/>
        <end position="147"/>
    </location>
</feature>
<feature type="binding site" description="distal binding residue" evidence="2">
    <location>
        <position position="64"/>
    </location>
    <ligand>
        <name>heme b</name>
        <dbReference type="ChEBI" id="CHEBI:60344"/>
    </ligand>
    <ligandPart>
        <name>Fe</name>
        <dbReference type="ChEBI" id="CHEBI:18248"/>
    </ligandPart>
</feature>
<feature type="binding site" description="proximal binding residue" evidence="2">
    <location>
        <position position="93"/>
    </location>
    <ligand>
        <name>heme b</name>
        <dbReference type="ChEBI" id="CHEBI:60344"/>
    </ligand>
    <ligandPart>
        <name>Fe</name>
        <dbReference type="ChEBI" id="CHEBI:18248"/>
    </ligandPart>
</feature>
<feature type="modified residue" description="Phosphoserine" evidence="1">
    <location>
        <position position="14"/>
    </location>
</feature>
<feature type="modified residue" description="Phosphoserine" evidence="1">
    <location>
        <position position="51"/>
    </location>
</feature>
<accession>P68022</accession>
<accession>P43350</accession>
<protein>
    <recommendedName>
        <fullName>Hemoglobin subunit epsilon</fullName>
    </recommendedName>
    <alternativeName>
        <fullName>Epsilon-globin</fullName>
    </alternativeName>
    <alternativeName>
        <fullName>Hemoglobin epsilon chain</fullName>
    </alternativeName>
</protein>
<dbReference type="EMBL" id="L25362">
    <property type="protein sequence ID" value="AAA35403.1"/>
    <property type="molecule type" value="Genomic_DNA"/>
</dbReference>
<dbReference type="SMR" id="P68022"/>
<dbReference type="GO" id="GO:0072562">
    <property type="term" value="C:blood microparticle"/>
    <property type="evidence" value="ECO:0007669"/>
    <property type="project" value="TreeGrafter"/>
</dbReference>
<dbReference type="GO" id="GO:0031838">
    <property type="term" value="C:haptoglobin-hemoglobin complex"/>
    <property type="evidence" value="ECO:0007669"/>
    <property type="project" value="TreeGrafter"/>
</dbReference>
<dbReference type="GO" id="GO:0005833">
    <property type="term" value="C:hemoglobin complex"/>
    <property type="evidence" value="ECO:0007669"/>
    <property type="project" value="InterPro"/>
</dbReference>
<dbReference type="GO" id="GO:0031720">
    <property type="term" value="F:haptoglobin binding"/>
    <property type="evidence" value="ECO:0007669"/>
    <property type="project" value="TreeGrafter"/>
</dbReference>
<dbReference type="GO" id="GO:0020037">
    <property type="term" value="F:heme binding"/>
    <property type="evidence" value="ECO:0007669"/>
    <property type="project" value="InterPro"/>
</dbReference>
<dbReference type="GO" id="GO:0031721">
    <property type="term" value="F:hemoglobin alpha binding"/>
    <property type="evidence" value="ECO:0007669"/>
    <property type="project" value="TreeGrafter"/>
</dbReference>
<dbReference type="GO" id="GO:0046872">
    <property type="term" value="F:metal ion binding"/>
    <property type="evidence" value="ECO:0007669"/>
    <property type="project" value="UniProtKB-KW"/>
</dbReference>
<dbReference type="GO" id="GO:0043177">
    <property type="term" value="F:organic acid binding"/>
    <property type="evidence" value="ECO:0007669"/>
    <property type="project" value="TreeGrafter"/>
</dbReference>
<dbReference type="GO" id="GO:0019825">
    <property type="term" value="F:oxygen binding"/>
    <property type="evidence" value="ECO:0007669"/>
    <property type="project" value="InterPro"/>
</dbReference>
<dbReference type="GO" id="GO:0005344">
    <property type="term" value="F:oxygen carrier activity"/>
    <property type="evidence" value="ECO:0007669"/>
    <property type="project" value="UniProtKB-KW"/>
</dbReference>
<dbReference type="GO" id="GO:0004601">
    <property type="term" value="F:peroxidase activity"/>
    <property type="evidence" value="ECO:0007669"/>
    <property type="project" value="TreeGrafter"/>
</dbReference>
<dbReference type="GO" id="GO:0042744">
    <property type="term" value="P:hydrogen peroxide catabolic process"/>
    <property type="evidence" value="ECO:0007669"/>
    <property type="project" value="TreeGrafter"/>
</dbReference>
<dbReference type="CDD" id="cd08925">
    <property type="entry name" value="Hb-beta-like"/>
    <property type="match status" value="1"/>
</dbReference>
<dbReference type="FunFam" id="1.10.490.10:FF:000001">
    <property type="entry name" value="Hemoglobin subunit beta"/>
    <property type="match status" value="1"/>
</dbReference>
<dbReference type="Gene3D" id="1.10.490.10">
    <property type="entry name" value="Globins"/>
    <property type="match status" value="1"/>
</dbReference>
<dbReference type="InterPro" id="IPR000971">
    <property type="entry name" value="Globin"/>
</dbReference>
<dbReference type="InterPro" id="IPR009050">
    <property type="entry name" value="Globin-like_sf"/>
</dbReference>
<dbReference type="InterPro" id="IPR012292">
    <property type="entry name" value="Globin/Proto"/>
</dbReference>
<dbReference type="InterPro" id="IPR002337">
    <property type="entry name" value="Hemoglobin_b"/>
</dbReference>
<dbReference type="InterPro" id="IPR050056">
    <property type="entry name" value="Hemoglobin_oxygen_transport"/>
</dbReference>
<dbReference type="PANTHER" id="PTHR11442">
    <property type="entry name" value="HEMOGLOBIN FAMILY MEMBER"/>
    <property type="match status" value="1"/>
</dbReference>
<dbReference type="PANTHER" id="PTHR11442:SF7">
    <property type="entry name" value="HEMOGLOBIN SUBUNIT EPSILON"/>
    <property type="match status" value="1"/>
</dbReference>
<dbReference type="Pfam" id="PF00042">
    <property type="entry name" value="Globin"/>
    <property type="match status" value="1"/>
</dbReference>
<dbReference type="PRINTS" id="PR00814">
    <property type="entry name" value="BETAHAEM"/>
</dbReference>
<dbReference type="SUPFAM" id="SSF46458">
    <property type="entry name" value="Globin-like"/>
    <property type="match status" value="1"/>
</dbReference>
<dbReference type="PROSITE" id="PS01033">
    <property type="entry name" value="GLOBIN"/>
    <property type="match status" value="1"/>
</dbReference>
<comment type="function">
    <text>The epsilon chain is a beta-type chain of early mammalian embryonic hemoglobin.</text>
</comment>
<comment type="subunit">
    <text>Heterotetramer of two alpha chains and two epsilon chains in early embryonic hemoglobin Gower-2; two zeta chains and two epsilon chains in early embryonic hemoglobin Gower-1.</text>
</comment>
<comment type="tissue specificity">
    <text>Red blood cells.</text>
</comment>
<comment type="similarity">
    <text evidence="2">Belongs to the globin family.</text>
</comment>
<evidence type="ECO:0000250" key="1">
    <source>
        <dbReference type="UniProtKB" id="P02100"/>
    </source>
</evidence>
<evidence type="ECO:0000255" key="2">
    <source>
        <dbReference type="PROSITE-ProRule" id="PRU00238"/>
    </source>
</evidence>
<keyword id="KW-0349">Heme</keyword>
<keyword id="KW-0408">Iron</keyword>
<keyword id="KW-0479">Metal-binding</keyword>
<keyword id="KW-0561">Oxygen transport</keyword>
<keyword id="KW-0597">Phosphoprotein</keyword>
<keyword id="KW-0813">Transport</keyword>
<organism>
    <name type="scientific">Plecturocebus moloch</name>
    <name type="common">Dusky titi monkey</name>
    <name type="synonym">Callicebus moloch</name>
    <dbReference type="NCBI Taxonomy" id="9523"/>
    <lineage>
        <taxon>Eukaryota</taxon>
        <taxon>Metazoa</taxon>
        <taxon>Chordata</taxon>
        <taxon>Craniata</taxon>
        <taxon>Vertebrata</taxon>
        <taxon>Euteleostomi</taxon>
        <taxon>Mammalia</taxon>
        <taxon>Eutheria</taxon>
        <taxon>Euarchontoglires</taxon>
        <taxon>Primates</taxon>
        <taxon>Haplorrhini</taxon>
        <taxon>Platyrrhini</taxon>
        <taxon>Pitheciidae</taxon>
        <taxon>Callicebinae</taxon>
        <taxon>Plecturocebus</taxon>
    </lineage>
</organism>
<sequence>MVHFTAEEKAAITSLWGKMNVEEAGGEALGRLLVVYPWTQRFFDNFGNLSSPSAILGNPKVKAHGKKVLTSFGDAIKNMDNLKTTFAKLSELHCDKLHVDPENFRLLGNVMVIILATHFGKEFTPEVQAAWQKLVSAVAIALGHKYH</sequence>
<name>HBE_PLEMO</name>
<gene>
    <name type="primary">HBE1</name>
</gene>